<proteinExistence type="evidence at transcript level"/>
<comment type="subcellular location">
    <subcellularLocation>
        <location evidence="1">Nucleus</location>
    </subcellularLocation>
</comment>
<accession>P52958</accession>
<evidence type="ECO:0000255" key="1">
    <source>
        <dbReference type="PROSITE-ProRule" id="PRU00227"/>
    </source>
</evidence>
<evidence type="ECO:0000256" key="2">
    <source>
        <dbReference type="SAM" id="MobiDB-lite"/>
    </source>
</evidence>
<sequence>MSSGDAPPQAQPQPHQQEQPNQRQSSTPAPSAAPVPPAPSTSTSNSAGGVSFRRQRASRACETCHARKVRCDAASLGVPCTNCVAFQIECRIPNPKRKKTQGTGGSQTNKDSDSDRGDGTEDPSPRPVAPTAASFAPRTPSVFHSHNGTPPTTLTEAQARKEEVDSGTYLDLVMKPKFTRAPITEAGRVAYLGESSNLTLLVHDRQGSADVVHYPLPENVRGSRARLTELDNVEIDILHQRGAFLLPPRALCDELIDAYFSWVHPIVPVINRTRFMRQYRDPKNPPSLLLLQSVLLAGTRACNNAQLMDANGSTTPAALTFYKRAKALYDANYEDDRVTIVQSLLLMGWYWEGPEDVTKNVFYWSRVATIVAQGSGMHRSVEQSQLSRSDKRLWKRIWWTLFTRDRSVAVALGRPVHINLDDADVEMLTEDDFIEDEQDRVSEYPPDPIHVQFFLEYVKLCEIMGLVLSQQYSVASKGRQRNAIDLTHSDMALADWLQNCPKIVYWEVPRHHFWSALLHSNYYTTLCLLHRAHMPPGGSARFPDPSPYPSRNIAFQAAAMITSIVENLAAHDQLRYCPAFVVYSLFSALIRHVYQMRSPVPSIQQVTQDRLRSCMSAMKEISRVWLVGKMVYALFESIIGNKVLEERLQKAEGKRHRKMRQTLTTQLEQHSRQQEAPKRKYDEMAIDFGTNTPQPQESYERSRPQTPSAVKAETSSMQPPPVSSPGARQSAADTFMGGTNSRPQTRPATPFNPSFSVPPTPPDLYLVTRNSPNLSQSLWENFQPDQLFPDSAAMPAFPNLSPIQTHASLDHSAMGPVPGNGQGGMPNQQAGQFQQRGNGILPQGFQGHTNMWQPNLDPNLPEGQSPDSWSSTSGQGQAVPTTLNVEDWFQFFGINGTDPNHLNLDIPLG</sequence>
<keyword id="KW-0238">DNA-binding</keyword>
<keyword id="KW-0479">Metal-binding</keyword>
<keyword id="KW-0539">Nucleus</keyword>
<keyword id="KW-0804">Transcription</keyword>
<keyword id="KW-0805">Transcription regulation</keyword>
<keyword id="KW-0862">Zinc</keyword>
<dbReference type="EMBL" id="U51671">
    <property type="protein sequence ID" value="AAA96824.1"/>
    <property type="molecule type" value="mRNA"/>
</dbReference>
<dbReference type="VEuPathDB" id="FungiDB:NECHADRAFT_72345"/>
<dbReference type="GO" id="GO:0005634">
    <property type="term" value="C:nucleus"/>
    <property type="evidence" value="ECO:0007669"/>
    <property type="project" value="UniProtKB-SubCell"/>
</dbReference>
<dbReference type="GO" id="GO:0003677">
    <property type="term" value="F:DNA binding"/>
    <property type="evidence" value="ECO:0007669"/>
    <property type="project" value="UniProtKB-KW"/>
</dbReference>
<dbReference type="GO" id="GO:0000981">
    <property type="term" value="F:DNA-binding transcription factor activity, RNA polymerase II-specific"/>
    <property type="evidence" value="ECO:0007669"/>
    <property type="project" value="InterPro"/>
</dbReference>
<dbReference type="GO" id="GO:0008270">
    <property type="term" value="F:zinc ion binding"/>
    <property type="evidence" value="ECO:0007669"/>
    <property type="project" value="InterPro"/>
</dbReference>
<dbReference type="GO" id="GO:0006351">
    <property type="term" value="P:DNA-templated transcription"/>
    <property type="evidence" value="ECO:0007669"/>
    <property type="project" value="InterPro"/>
</dbReference>
<dbReference type="CDD" id="cd12148">
    <property type="entry name" value="fungal_TF_MHR"/>
    <property type="match status" value="1"/>
</dbReference>
<dbReference type="CDD" id="cd00067">
    <property type="entry name" value="GAL4"/>
    <property type="match status" value="1"/>
</dbReference>
<dbReference type="Gene3D" id="4.10.240.10">
    <property type="entry name" value="Zn(2)-C6 fungal-type DNA-binding domain"/>
    <property type="match status" value="1"/>
</dbReference>
<dbReference type="InterPro" id="IPR052073">
    <property type="entry name" value="Amide_Lactam_Regulators"/>
</dbReference>
<dbReference type="InterPro" id="IPR007219">
    <property type="entry name" value="Transcription_factor_dom_fun"/>
</dbReference>
<dbReference type="InterPro" id="IPR036864">
    <property type="entry name" value="Zn2-C6_fun-type_DNA-bd_sf"/>
</dbReference>
<dbReference type="InterPro" id="IPR001138">
    <property type="entry name" value="Zn2Cys6_DnaBD"/>
</dbReference>
<dbReference type="PANTHER" id="PTHR47171">
    <property type="entry name" value="FARA-RELATED"/>
    <property type="match status" value="1"/>
</dbReference>
<dbReference type="PANTHER" id="PTHR47171:SF3">
    <property type="entry name" value="FARA-RELATED"/>
    <property type="match status" value="1"/>
</dbReference>
<dbReference type="Pfam" id="PF04082">
    <property type="entry name" value="Fungal_trans"/>
    <property type="match status" value="1"/>
</dbReference>
<dbReference type="Pfam" id="PF00172">
    <property type="entry name" value="Zn_clus"/>
    <property type="match status" value="1"/>
</dbReference>
<dbReference type="SMART" id="SM00906">
    <property type="entry name" value="Fungal_trans"/>
    <property type="match status" value="1"/>
</dbReference>
<dbReference type="SMART" id="SM00066">
    <property type="entry name" value="GAL4"/>
    <property type="match status" value="1"/>
</dbReference>
<dbReference type="SUPFAM" id="SSF57701">
    <property type="entry name" value="Zn2/Cys6 DNA-binding domain"/>
    <property type="match status" value="1"/>
</dbReference>
<dbReference type="PROSITE" id="PS00463">
    <property type="entry name" value="ZN2_CY6_FUNGAL_1"/>
    <property type="match status" value="1"/>
</dbReference>
<dbReference type="PROSITE" id="PS50048">
    <property type="entry name" value="ZN2_CY6_FUNGAL_2"/>
    <property type="match status" value="1"/>
</dbReference>
<name>CTF1A_FUSVN</name>
<protein>
    <recommendedName>
        <fullName>Cutinase transcription factor 1 alpha</fullName>
    </recommendedName>
</protein>
<feature type="chain" id="PRO_0000114943" description="Cutinase transcription factor 1 alpha">
    <location>
        <begin position="1"/>
        <end position="909"/>
    </location>
</feature>
<feature type="DNA-binding region" description="Zn(2)-C6 fungal-type" evidence="1">
    <location>
        <begin position="61"/>
        <end position="90"/>
    </location>
</feature>
<feature type="region of interest" description="Disordered" evidence="2">
    <location>
        <begin position="1"/>
        <end position="51"/>
    </location>
</feature>
<feature type="region of interest" description="Disordered" evidence="2">
    <location>
        <begin position="95"/>
        <end position="159"/>
    </location>
</feature>
<feature type="region of interest" description="Disordered" evidence="2">
    <location>
        <begin position="651"/>
        <end position="757"/>
    </location>
</feature>
<feature type="region of interest" description="Disordered" evidence="2">
    <location>
        <begin position="841"/>
        <end position="878"/>
    </location>
</feature>
<feature type="compositionally biased region" description="Low complexity" evidence="2">
    <location>
        <begin position="12"/>
        <end position="30"/>
    </location>
</feature>
<feature type="compositionally biased region" description="Basic and acidic residues" evidence="2">
    <location>
        <begin position="110"/>
        <end position="119"/>
    </location>
</feature>
<feature type="compositionally biased region" description="Polar residues" evidence="2">
    <location>
        <begin position="142"/>
        <end position="156"/>
    </location>
</feature>
<feature type="compositionally biased region" description="Basic and acidic residues" evidence="2">
    <location>
        <begin position="669"/>
        <end position="683"/>
    </location>
</feature>
<feature type="compositionally biased region" description="Polar residues" evidence="2">
    <location>
        <begin position="704"/>
        <end position="717"/>
    </location>
</feature>
<feature type="compositionally biased region" description="Polar residues" evidence="2">
    <location>
        <begin position="737"/>
        <end position="755"/>
    </location>
</feature>
<feature type="compositionally biased region" description="Polar residues" evidence="2">
    <location>
        <begin position="865"/>
        <end position="878"/>
    </location>
</feature>
<organism>
    <name type="scientific">Fusarium vanettenii</name>
    <name type="common">Neocosmospora pisi</name>
    <dbReference type="NCBI Taxonomy" id="2747968"/>
    <lineage>
        <taxon>Eukaryota</taxon>
        <taxon>Fungi</taxon>
        <taxon>Dikarya</taxon>
        <taxon>Ascomycota</taxon>
        <taxon>Pezizomycotina</taxon>
        <taxon>Sordariomycetes</taxon>
        <taxon>Hypocreomycetidae</taxon>
        <taxon>Hypocreales</taxon>
        <taxon>Nectriaceae</taxon>
        <taxon>Fusarium</taxon>
        <taxon>Fusarium solani species complex</taxon>
    </lineage>
</organism>
<reference key="1">
    <citation type="submission" date="1996-03" db="EMBL/GenBank/DDBJ databases">
        <authorList>
            <person name="Li D."/>
            <person name="Kolattukudy P.E."/>
        </authorList>
    </citation>
    <scope>NUCLEOTIDE SEQUENCE [MRNA]</scope>
</reference>
<gene>
    <name type="primary">CTF1-ALPHA</name>
</gene>